<sequence>MTLLSSHLLVFSAVHHRAPPTTTTRNSPTTNHTVRFLCSPGVPPAVRLDQRLPRFVVPGAGAEDLLYNAGATVGVLGGGYALVRAFDELTRRNILQQGLSRKLVHILSGLLFLVSWPIFSNSPKARYFAAFVPLVNCLRLLVNGLSLASDEGLIKSVTREGDPLELLRGPLYYVLILILSALVFWRESPIGVISLAMMCAGDGIADIIGRRYGSMKIPYNEHKSLAGSMSMLVFGFLVSIGMLYYYSVLGHVQLDWASTLPRVAFISFVATLVESLPITKVVDDNISVPLATMAVAFFTFHH</sequence>
<organism>
    <name type="scientific">Glycine max</name>
    <name type="common">Soybean</name>
    <name type="synonym">Glycine hispida</name>
    <dbReference type="NCBI Taxonomy" id="3847"/>
    <lineage>
        <taxon>Eukaryota</taxon>
        <taxon>Viridiplantae</taxon>
        <taxon>Streptophyta</taxon>
        <taxon>Embryophyta</taxon>
        <taxon>Tracheophyta</taxon>
        <taxon>Spermatophyta</taxon>
        <taxon>Magnoliopsida</taxon>
        <taxon>eudicotyledons</taxon>
        <taxon>Gunneridae</taxon>
        <taxon>Pentapetalae</taxon>
        <taxon>rosids</taxon>
        <taxon>fabids</taxon>
        <taxon>Fabales</taxon>
        <taxon>Fabaceae</taxon>
        <taxon>Papilionoideae</taxon>
        <taxon>50 kb inversion clade</taxon>
        <taxon>NPAAA clade</taxon>
        <taxon>indigoferoid/millettioid clade</taxon>
        <taxon>Phaseoleae</taxon>
        <taxon>Glycine</taxon>
        <taxon>Glycine subgen. Soja</taxon>
    </lineage>
</organism>
<protein>
    <recommendedName>
        <fullName>Probable phytol kinase 1, chloroplastic</fullName>
        <ecNumber>2.7.1.182</ecNumber>
    </recommendedName>
</protein>
<name>PHYK1_SOYBN</name>
<proteinExistence type="evidence at transcript level"/>
<reference key="1">
    <citation type="journal article" date="2006" name="Plant Cell">
        <title>The Arabidopsis vitamin E pathway gene5-1 mutant reveals a critical role for phytol kinase in seed tocopherol biosynthesis.</title>
        <authorList>
            <person name="Valentin H.E."/>
            <person name="Lincoln K."/>
            <person name="Moshiri F."/>
            <person name="Jensen P.K."/>
            <person name="Qi Q."/>
            <person name="Venkatesh T.V."/>
            <person name="Karunanandaa B."/>
            <person name="Baszis S.R."/>
            <person name="Norris S.R."/>
            <person name="Savidge B."/>
            <person name="Gruys K.J."/>
            <person name="Last R.L."/>
        </authorList>
    </citation>
    <scope>NUCLEOTIDE SEQUENCE [MRNA]</scope>
</reference>
<keyword id="KW-0150">Chloroplast</keyword>
<keyword id="KW-0418">Kinase</keyword>
<keyword id="KW-0472">Membrane</keyword>
<keyword id="KW-0934">Plastid</keyword>
<keyword id="KW-1185">Reference proteome</keyword>
<keyword id="KW-0808">Transferase</keyword>
<keyword id="KW-0809">Transit peptide</keyword>
<keyword id="KW-0812">Transmembrane</keyword>
<keyword id="KW-1133">Transmembrane helix</keyword>
<evidence type="ECO:0000250" key="1"/>
<evidence type="ECO:0000255" key="2"/>
<evidence type="ECO:0000305" key="3"/>
<dbReference type="EC" id="2.7.1.182"/>
<dbReference type="EMBL" id="DQ163027">
    <property type="protein sequence ID" value="ABA42676.1"/>
    <property type="molecule type" value="mRNA"/>
</dbReference>
<dbReference type="RefSeq" id="NP_001239775.1">
    <property type="nucleotide sequence ID" value="NM_001252846.2"/>
</dbReference>
<dbReference type="FunCoup" id="Q2N2K1">
    <property type="interactions" value="611"/>
</dbReference>
<dbReference type="STRING" id="3847.Q2N2K1"/>
<dbReference type="PaxDb" id="3847-GLYMA10G34420.1"/>
<dbReference type="EnsemblPlants" id="KRH34703">
    <property type="protein sequence ID" value="KRH34703"/>
    <property type="gene ID" value="GLYMA_10G200500"/>
</dbReference>
<dbReference type="GeneID" id="100788252"/>
<dbReference type="Gramene" id="KRH34703">
    <property type="protein sequence ID" value="KRH34703"/>
    <property type="gene ID" value="GLYMA_10G200500"/>
</dbReference>
<dbReference type="KEGG" id="gmx:100788252"/>
<dbReference type="eggNOG" id="KOG4453">
    <property type="taxonomic scope" value="Eukaryota"/>
</dbReference>
<dbReference type="HOGENOM" id="CLU_058561_2_1_1"/>
<dbReference type="InParanoid" id="Q2N2K1"/>
<dbReference type="OMA" id="VICLANM"/>
<dbReference type="OrthoDB" id="5673at2759"/>
<dbReference type="UniPathway" id="UPA00160"/>
<dbReference type="Proteomes" id="UP000008827">
    <property type="component" value="Chromosome 10"/>
</dbReference>
<dbReference type="GO" id="GO:0009507">
    <property type="term" value="C:chloroplast"/>
    <property type="evidence" value="ECO:0000318"/>
    <property type="project" value="GO_Central"/>
</dbReference>
<dbReference type="GO" id="GO:0031969">
    <property type="term" value="C:chloroplast membrane"/>
    <property type="evidence" value="ECO:0007669"/>
    <property type="project" value="UniProtKB-SubCell"/>
</dbReference>
<dbReference type="GO" id="GO:0010276">
    <property type="term" value="F:phytol kinase activity"/>
    <property type="evidence" value="ECO:0000318"/>
    <property type="project" value="GO_Central"/>
</dbReference>
<dbReference type="GO" id="GO:0010189">
    <property type="term" value="P:vitamin E biosynthetic process"/>
    <property type="evidence" value="ECO:0000318"/>
    <property type="project" value="GO_Central"/>
</dbReference>
<dbReference type="InterPro" id="IPR039606">
    <property type="entry name" value="Phytol/farnesol_kinase"/>
</dbReference>
<dbReference type="PANTHER" id="PTHR32523:SF8">
    <property type="entry name" value="DOLICHOL KINASE"/>
    <property type="match status" value="1"/>
</dbReference>
<dbReference type="PANTHER" id="PTHR32523">
    <property type="entry name" value="PHYTOL KINASE 1, CHLOROPLASTIC"/>
    <property type="match status" value="1"/>
</dbReference>
<comment type="function">
    <text evidence="1">Involved in the activation and reutilization of phytol from chlorophyll degradation in plant metabolism, including tocopherol biosynthesis. Catalyzes the conversion of phytol to phytol monophosphate (PMP) (By similarity).</text>
</comment>
<comment type="catalytic activity">
    <reaction>
        <text>phytol + CTP = phytyl phosphate + CDP + H(+)</text>
        <dbReference type="Rhea" id="RHEA:38055"/>
        <dbReference type="ChEBI" id="CHEBI:15378"/>
        <dbReference type="ChEBI" id="CHEBI:17327"/>
        <dbReference type="ChEBI" id="CHEBI:37563"/>
        <dbReference type="ChEBI" id="CHEBI:58069"/>
        <dbReference type="ChEBI" id="CHEBI:75483"/>
        <dbReference type="EC" id="2.7.1.182"/>
    </reaction>
</comment>
<comment type="pathway">
    <text>Cofactor biosynthesis; tocopherol biosynthesis.</text>
</comment>
<comment type="subcellular location">
    <subcellularLocation>
        <location evidence="3">Plastid</location>
        <location evidence="3">Chloroplast membrane</location>
        <topology evidence="3">Multi-pass membrane protein</topology>
    </subcellularLocation>
</comment>
<comment type="similarity">
    <text evidence="3">Belongs to the polyprenol kinase family.</text>
</comment>
<accession>Q2N2K1</accession>
<feature type="transit peptide" description="Chloroplast" evidence="2">
    <location>
        <begin position="1"/>
        <end position="57"/>
    </location>
</feature>
<feature type="chain" id="PRO_0000226593" description="Probable phytol kinase 1, chloroplastic">
    <location>
        <begin position="58"/>
        <end position="302"/>
    </location>
</feature>
<feature type="transmembrane region" description="Helical" evidence="2">
    <location>
        <begin position="65"/>
        <end position="83"/>
    </location>
</feature>
<feature type="transmembrane region" description="Helical" evidence="2">
    <location>
        <begin position="103"/>
        <end position="123"/>
    </location>
</feature>
<feature type="transmembrane region" description="Helical" evidence="2">
    <location>
        <begin position="128"/>
        <end position="148"/>
    </location>
</feature>
<feature type="transmembrane region" description="Helical" evidence="2">
    <location>
        <begin position="164"/>
        <end position="184"/>
    </location>
</feature>
<feature type="transmembrane region" description="Helical" evidence="2">
    <location>
        <begin position="189"/>
        <end position="209"/>
    </location>
</feature>
<feature type="transmembrane region" description="Helical" evidence="2">
    <location>
        <begin position="232"/>
        <end position="252"/>
    </location>
</feature>
<feature type="transmembrane region" description="Helical" evidence="2">
    <location>
        <begin position="263"/>
        <end position="283"/>
    </location>
</feature>